<proteinExistence type="evidence at protein level"/>
<organism>
    <name type="scientific">Homo sapiens</name>
    <name type="common">Human</name>
    <dbReference type="NCBI Taxonomy" id="9606"/>
    <lineage>
        <taxon>Eukaryota</taxon>
        <taxon>Metazoa</taxon>
        <taxon>Chordata</taxon>
        <taxon>Craniata</taxon>
        <taxon>Vertebrata</taxon>
        <taxon>Euteleostomi</taxon>
        <taxon>Mammalia</taxon>
        <taxon>Eutheria</taxon>
        <taxon>Euarchontoglires</taxon>
        <taxon>Primates</taxon>
        <taxon>Haplorrhini</taxon>
        <taxon>Catarrhini</taxon>
        <taxon>Hominidae</taxon>
        <taxon>Homo</taxon>
    </lineage>
</organism>
<keyword id="KW-0025">Alternative splicing</keyword>
<keyword id="KW-1003">Cell membrane</keyword>
<keyword id="KW-0963">Cytoplasm</keyword>
<keyword id="KW-0333">Golgi apparatus</keyword>
<keyword id="KW-0342">GTP-binding</keyword>
<keyword id="KW-0378">Hydrolase</keyword>
<keyword id="KW-0449">Lipoprotein</keyword>
<keyword id="KW-0460">Magnesium</keyword>
<keyword id="KW-0472">Membrane</keyword>
<keyword id="KW-0479">Metal-binding</keyword>
<keyword id="KW-0547">Nucleotide-binding</keyword>
<keyword id="KW-0564">Palmitate</keyword>
<keyword id="KW-0636">Prenylation</keyword>
<keyword id="KW-1267">Proteomics identification</keyword>
<keyword id="KW-1185">Reference proteome</keyword>
<keyword id="KW-0833">Ubl conjugation pathway</keyword>
<evidence type="ECO:0000250" key="1">
    <source>
        <dbReference type="UniProtKB" id="P62820"/>
    </source>
</evidence>
<evidence type="ECO:0000255" key="2"/>
<evidence type="ECO:0000255" key="3">
    <source>
        <dbReference type="PROSITE-ProRule" id="PRU00194"/>
    </source>
</evidence>
<evidence type="ECO:0000255" key="4">
    <source>
        <dbReference type="PROSITE-ProRule" id="PRU00753"/>
    </source>
</evidence>
<evidence type="ECO:0000256" key="5">
    <source>
        <dbReference type="SAM" id="MobiDB-lite"/>
    </source>
</evidence>
<evidence type="ECO:0000269" key="6">
    <source>
    </source>
</evidence>
<evidence type="ECO:0000269" key="7">
    <source>
    </source>
</evidence>
<evidence type="ECO:0000269" key="8">
    <source>
    </source>
</evidence>
<evidence type="ECO:0000303" key="9">
    <source ref="1"/>
</evidence>
<evidence type="ECO:0000305" key="10"/>
<evidence type="ECO:0000305" key="11">
    <source>
    </source>
</evidence>
<evidence type="ECO:0000312" key="12">
    <source>
        <dbReference type="HGNC" id="HGNC:18285"/>
    </source>
</evidence>
<dbReference type="EC" id="3.6.5.2" evidence="7"/>
<dbReference type="EMBL" id="AY823398">
    <property type="protein sequence ID" value="AAV83924.1"/>
    <property type="molecule type" value="mRNA"/>
</dbReference>
<dbReference type="EMBL" id="AE006464">
    <property type="protein sequence ID" value="AAK61236.1"/>
    <property type="molecule type" value="Genomic_DNA"/>
</dbReference>
<dbReference type="EMBL" id="Z84479">
    <property type="status" value="NOT_ANNOTATED_CDS"/>
    <property type="molecule type" value="Genomic_DNA"/>
</dbReference>
<dbReference type="EMBL" id="Z98883">
    <property type="status" value="NOT_ANNOTATED_CDS"/>
    <property type="molecule type" value="Genomic_DNA"/>
</dbReference>
<dbReference type="EMBL" id="CH471112">
    <property type="protein sequence ID" value="EAW85791.1"/>
    <property type="molecule type" value="Genomic_DNA"/>
</dbReference>
<dbReference type="EMBL" id="CH471112">
    <property type="protein sequence ID" value="EAW85792.1"/>
    <property type="molecule type" value="Genomic_DNA"/>
</dbReference>
<dbReference type="EMBL" id="CH471112">
    <property type="protein sequence ID" value="EAW85793.1"/>
    <property type="molecule type" value="Genomic_DNA"/>
</dbReference>
<dbReference type="EMBL" id="CH471112">
    <property type="protein sequence ID" value="EAW85794.1"/>
    <property type="molecule type" value="Genomic_DNA"/>
</dbReference>
<dbReference type="EMBL" id="BC028696">
    <property type="protein sequence ID" value="AAH28696.1"/>
    <property type="molecule type" value="mRNA"/>
</dbReference>
<dbReference type="CCDS" id="CCDS10413.1">
    <molecule id="Q96S21-1"/>
</dbReference>
<dbReference type="RefSeq" id="NP_001166134.1">
    <molecule id="Q96S21-1"/>
    <property type="nucleotide sequence ID" value="NM_001172663.2"/>
</dbReference>
<dbReference type="RefSeq" id="NP_001166135.1">
    <molecule id="Q96S21-1"/>
    <property type="nucleotide sequence ID" value="NM_001172664.2"/>
</dbReference>
<dbReference type="RefSeq" id="NP_001166136.1">
    <molecule id="Q96S21-1"/>
    <property type="nucleotide sequence ID" value="NM_001172665.2"/>
</dbReference>
<dbReference type="RefSeq" id="NP_001166137.1">
    <molecule id="Q96S21-2"/>
    <property type="nucleotide sequence ID" value="NM_001172666.2"/>
</dbReference>
<dbReference type="RefSeq" id="NP_066991.3">
    <molecule id="Q96S21-1"/>
    <property type="nucleotide sequence ID" value="NM_021168.4"/>
</dbReference>
<dbReference type="SMR" id="Q96S21"/>
<dbReference type="BioGRID" id="121771">
    <property type="interactions" value="41"/>
</dbReference>
<dbReference type="FunCoup" id="Q96S21">
    <property type="interactions" value="1187"/>
</dbReference>
<dbReference type="IntAct" id="Q96S21">
    <property type="interactions" value="24"/>
</dbReference>
<dbReference type="STRING" id="9606.ENSP00000248139"/>
<dbReference type="GlyGen" id="Q96S21">
    <property type="glycosylation" value="1 site, 1 O-linked glycan (1 site)"/>
</dbReference>
<dbReference type="iPTMnet" id="Q96S21"/>
<dbReference type="PhosphoSitePlus" id="Q96S21"/>
<dbReference type="BioMuta" id="RAB40C"/>
<dbReference type="DMDM" id="27734457"/>
<dbReference type="jPOST" id="Q96S21"/>
<dbReference type="MassIVE" id="Q96S21"/>
<dbReference type="PaxDb" id="9606-ENSP00000438492"/>
<dbReference type="PeptideAtlas" id="Q96S21"/>
<dbReference type="ProteomicsDB" id="78059">
    <molecule id="Q96S21-1"/>
</dbReference>
<dbReference type="Pumba" id="Q96S21"/>
<dbReference type="TopDownProteomics" id="Q96S21-1">
    <molecule id="Q96S21-1"/>
</dbReference>
<dbReference type="Antibodypedia" id="35310">
    <property type="antibodies" value="134 antibodies from 23 providers"/>
</dbReference>
<dbReference type="DNASU" id="57799"/>
<dbReference type="Ensembl" id="ENST00000248139.8">
    <molecule id="Q96S21-1"/>
    <property type="protein sequence ID" value="ENSP00000248139.3"/>
    <property type="gene ID" value="ENSG00000197562.10"/>
</dbReference>
<dbReference type="Ensembl" id="ENST00000535977.5">
    <molecule id="Q96S21-1"/>
    <property type="protein sequence ID" value="ENSP00000438492.1"/>
    <property type="gene ID" value="ENSG00000197562.10"/>
</dbReference>
<dbReference type="Ensembl" id="ENST00000538492.5">
    <molecule id="Q96S21-1"/>
    <property type="protein sequence ID" value="ENSP00000438382.1"/>
    <property type="gene ID" value="ENSG00000197562.10"/>
</dbReference>
<dbReference type="Ensembl" id="ENST00000539661.5">
    <molecule id="Q96S21-1"/>
    <property type="protein sequence ID" value="ENSP00000445050.1"/>
    <property type="gene ID" value="ENSG00000197562.10"/>
</dbReference>
<dbReference type="GeneID" id="57799"/>
<dbReference type="KEGG" id="hsa:57799"/>
<dbReference type="MANE-Select" id="ENST00000248139.8">
    <property type="protein sequence ID" value="ENSP00000248139.3"/>
    <property type="RefSeq nucleotide sequence ID" value="NM_021168.5"/>
    <property type="RefSeq protein sequence ID" value="NP_066991.3"/>
</dbReference>
<dbReference type="UCSC" id="uc002chr.4">
    <molecule id="Q96S21-1"/>
    <property type="organism name" value="human"/>
</dbReference>
<dbReference type="AGR" id="HGNC:18285"/>
<dbReference type="CTD" id="57799"/>
<dbReference type="DisGeNET" id="57799"/>
<dbReference type="GeneCards" id="RAB40C"/>
<dbReference type="HGNC" id="HGNC:18285">
    <property type="gene designation" value="RAB40C"/>
</dbReference>
<dbReference type="HPA" id="ENSG00000197562">
    <property type="expression patterns" value="Low tissue specificity"/>
</dbReference>
<dbReference type="MIM" id="619551">
    <property type="type" value="gene"/>
</dbReference>
<dbReference type="neXtProt" id="NX_Q96S21"/>
<dbReference type="OpenTargets" id="ENSG00000197562"/>
<dbReference type="PharmGKB" id="PA34139"/>
<dbReference type="VEuPathDB" id="HostDB:ENSG00000197562"/>
<dbReference type="eggNOG" id="KOG0078">
    <property type="taxonomic scope" value="Eukaryota"/>
</dbReference>
<dbReference type="GeneTree" id="ENSGT00940000158979"/>
<dbReference type="InParanoid" id="Q96S21"/>
<dbReference type="OMA" id="HINIGQC"/>
<dbReference type="OrthoDB" id="6339763at2759"/>
<dbReference type="PAN-GO" id="Q96S21">
    <property type="GO annotations" value="5 GO annotations based on evolutionary models"/>
</dbReference>
<dbReference type="PhylomeDB" id="Q96S21"/>
<dbReference type="TreeFam" id="TF323230"/>
<dbReference type="PathwayCommons" id="Q96S21"/>
<dbReference type="Reactome" id="R-HSA-8873719">
    <property type="pathway name" value="RAB geranylgeranylation"/>
</dbReference>
<dbReference type="SignaLink" id="Q96S21"/>
<dbReference type="UniPathway" id="UPA00143"/>
<dbReference type="BioGRID-ORCS" id="57799">
    <property type="hits" value="11 hits in 1159 CRISPR screens"/>
</dbReference>
<dbReference type="ChiTaRS" id="RAB40C">
    <property type="organism name" value="human"/>
</dbReference>
<dbReference type="GenomeRNAi" id="57799"/>
<dbReference type="Pharos" id="Q96S21">
    <property type="development level" value="Tbio"/>
</dbReference>
<dbReference type="PRO" id="PR:Q96S21"/>
<dbReference type="Proteomes" id="UP000005640">
    <property type="component" value="Chromosome 16"/>
</dbReference>
<dbReference type="RNAct" id="Q96S21">
    <property type="molecule type" value="protein"/>
</dbReference>
<dbReference type="Bgee" id="ENSG00000197562">
    <property type="expression patterns" value="Expressed in skin of leg and 96 other cell types or tissues"/>
</dbReference>
<dbReference type="ExpressionAtlas" id="Q96S21">
    <property type="expression patterns" value="baseline and differential"/>
</dbReference>
<dbReference type="GO" id="GO:0005768">
    <property type="term" value="C:endosome"/>
    <property type="evidence" value="ECO:0000318"/>
    <property type="project" value="GO_Central"/>
</dbReference>
<dbReference type="GO" id="GO:0005886">
    <property type="term" value="C:plasma membrane"/>
    <property type="evidence" value="ECO:0000318"/>
    <property type="project" value="GO_Central"/>
</dbReference>
<dbReference type="GO" id="GO:0008021">
    <property type="term" value="C:synaptic vesicle"/>
    <property type="evidence" value="ECO:0000318"/>
    <property type="project" value="GO_Central"/>
</dbReference>
<dbReference type="GO" id="GO:0005525">
    <property type="term" value="F:GTP binding"/>
    <property type="evidence" value="ECO:0007669"/>
    <property type="project" value="UniProtKB-KW"/>
</dbReference>
<dbReference type="GO" id="GO:0003924">
    <property type="term" value="F:GTPase activity"/>
    <property type="evidence" value="ECO:0000318"/>
    <property type="project" value="GO_Central"/>
</dbReference>
<dbReference type="GO" id="GO:0006887">
    <property type="term" value="P:exocytosis"/>
    <property type="evidence" value="ECO:0000318"/>
    <property type="project" value="GO_Central"/>
</dbReference>
<dbReference type="GO" id="GO:0035556">
    <property type="term" value="P:intracellular signal transduction"/>
    <property type="evidence" value="ECO:0007669"/>
    <property type="project" value="InterPro"/>
</dbReference>
<dbReference type="GO" id="GO:0016567">
    <property type="term" value="P:protein ubiquitination"/>
    <property type="evidence" value="ECO:0007669"/>
    <property type="project" value="UniProtKB-UniPathway"/>
</dbReference>
<dbReference type="CDD" id="cd04121">
    <property type="entry name" value="Rab40"/>
    <property type="match status" value="1"/>
</dbReference>
<dbReference type="CDD" id="cd03742">
    <property type="entry name" value="SOCS_Rab40"/>
    <property type="match status" value="1"/>
</dbReference>
<dbReference type="FunFam" id="3.40.50.300:FF:000371">
    <property type="entry name" value="RAB40C, member RAS oncogene family"/>
    <property type="match status" value="1"/>
</dbReference>
<dbReference type="Gene3D" id="3.40.50.300">
    <property type="entry name" value="P-loop containing nucleotide triphosphate hydrolases"/>
    <property type="match status" value="1"/>
</dbReference>
<dbReference type="InterPro" id="IPR027417">
    <property type="entry name" value="P-loop_NTPase"/>
</dbReference>
<dbReference type="InterPro" id="IPR005225">
    <property type="entry name" value="Small_GTP-bd"/>
</dbReference>
<dbReference type="InterPro" id="IPR001806">
    <property type="entry name" value="Small_GTPase"/>
</dbReference>
<dbReference type="InterPro" id="IPR050305">
    <property type="entry name" value="Small_GTPase_Rab"/>
</dbReference>
<dbReference type="InterPro" id="IPR001496">
    <property type="entry name" value="SOCS_box"/>
</dbReference>
<dbReference type="InterPro" id="IPR036036">
    <property type="entry name" value="SOCS_box-like_dom_sf"/>
</dbReference>
<dbReference type="NCBIfam" id="TIGR00231">
    <property type="entry name" value="small_GTP"/>
    <property type="match status" value="1"/>
</dbReference>
<dbReference type="PANTHER" id="PTHR47980">
    <property type="entry name" value="LD44762P"/>
    <property type="match status" value="1"/>
</dbReference>
<dbReference type="Pfam" id="PF00071">
    <property type="entry name" value="Ras"/>
    <property type="match status" value="1"/>
</dbReference>
<dbReference type="Pfam" id="PF07525">
    <property type="entry name" value="SOCS_box"/>
    <property type="match status" value="1"/>
</dbReference>
<dbReference type="PRINTS" id="PR00449">
    <property type="entry name" value="RASTRNSFRMNG"/>
</dbReference>
<dbReference type="SMART" id="SM00175">
    <property type="entry name" value="RAB"/>
    <property type="match status" value="1"/>
</dbReference>
<dbReference type="SMART" id="SM00176">
    <property type="entry name" value="RAN"/>
    <property type="match status" value="1"/>
</dbReference>
<dbReference type="SMART" id="SM00173">
    <property type="entry name" value="RAS"/>
    <property type="match status" value="1"/>
</dbReference>
<dbReference type="SMART" id="SM00174">
    <property type="entry name" value="RHO"/>
    <property type="match status" value="1"/>
</dbReference>
<dbReference type="SMART" id="SM00253">
    <property type="entry name" value="SOCS"/>
    <property type="match status" value="1"/>
</dbReference>
<dbReference type="SMART" id="SM00969">
    <property type="entry name" value="SOCS_box"/>
    <property type="match status" value="1"/>
</dbReference>
<dbReference type="SUPFAM" id="SSF52540">
    <property type="entry name" value="P-loop containing nucleoside triphosphate hydrolases"/>
    <property type="match status" value="1"/>
</dbReference>
<dbReference type="SUPFAM" id="SSF158235">
    <property type="entry name" value="SOCS box-like"/>
    <property type="match status" value="1"/>
</dbReference>
<dbReference type="PROSITE" id="PS51419">
    <property type="entry name" value="RAB"/>
    <property type="match status" value="1"/>
</dbReference>
<dbReference type="PROSITE" id="PS50225">
    <property type="entry name" value="SOCS"/>
    <property type="match status" value="1"/>
</dbReference>
<feature type="chain" id="PRO_0000121261" description="Ras-related protein Rab-40C">
    <location>
        <begin position="1"/>
        <end position="281"/>
    </location>
</feature>
<feature type="domain" description="SOCS box" evidence="3">
    <location>
        <begin position="175"/>
        <end position="228"/>
    </location>
</feature>
<feature type="region of interest" description="Switch-I" evidence="4">
    <location>
        <begin position="41"/>
        <end position="49"/>
    </location>
</feature>
<feature type="region of interest" description="Switch-II" evidence="4">
    <location>
        <begin position="72"/>
        <end position="88"/>
    </location>
</feature>
<feature type="region of interest" description="Disordered" evidence="5">
    <location>
        <begin position="245"/>
        <end position="281"/>
    </location>
</feature>
<feature type="compositionally biased region" description="Polar residues" evidence="5">
    <location>
        <begin position="270"/>
        <end position="281"/>
    </location>
</feature>
<feature type="binding site" evidence="1">
    <location>
        <position position="23"/>
    </location>
    <ligand>
        <name>GTP</name>
        <dbReference type="ChEBI" id="CHEBI:37565"/>
    </ligand>
</feature>
<feature type="binding site" evidence="1">
    <location>
        <position position="26"/>
    </location>
    <ligand>
        <name>GTP</name>
        <dbReference type="ChEBI" id="CHEBI:37565"/>
    </ligand>
</feature>
<feature type="binding site" evidence="1">
    <location>
        <position position="27"/>
    </location>
    <ligand>
        <name>GTP</name>
        <dbReference type="ChEBI" id="CHEBI:37565"/>
    </ligand>
</feature>
<feature type="binding site" evidence="1">
    <location>
        <position position="46"/>
    </location>
    <ligand>
        <name>GTP</name>
        <dbReference type="ChEBI" id="CHEBI:37565"/>
    </ligand>
</feature>
<feature type="binding site" evidence="1">
    <location>
        <position position="46"/>
    </location>
    <ligand>
        <name>Mg(2+)</name>
        <dbReference type="ChEBI" id="CHEBI:18420"/>
    </ligand>
</feature>
<feature type="binding site" evidence="1">
    <location>
        <position position="69"/>
    </location>
    <ligand>
        <name>Mg(2+)</name>
        <dbReference type="ChEBI" id="CHEBI:18420"/>
    </ligand>
</feature>
<feature type="binding site" evidence="1">
    <location>
        <position position="72"/>
    </location>
    <ligand>
        <name>GTP</name>
        <dbReference type="ChEBI" id="CHEBI:37565"/>
    </ligand>
</feature>
<feature type="binding site" evidence="1">
    <location>
        <position position="126"/>
    </location>
    <ligand>
        <name>GTP</name>
        <dbReference type="ChEBI" id="CHEBI:37565"/>
    </ligand>
</feature>
<feature type="binding site" evidence="1">
    <location>
        <position position="127"/>
    </location>
    <ligand>
        <name>GTP</name>
        <dbReference type="ChEBI" id="CHEBI:37565"/>
    </ligand>
</feature>
<feature type="lipid moiety-binding region" description="S-palmitoyl cysteine" evidence="2">
    <location>
        <position position="273"/>
    </location>
</feature>
<feature type="lipid moiety-binding region" description="S-geranylgeranyl cysteine" evidence="1">
    <location>
        <position position="278"/>
    </location>
</feature>
<feature type="splice variant" id="VSP_055835" description="In isoform 2." evidence="9">
    <location>
        <begin position="115"/>
        <end position="133"/>
    </location>
</feature>
<feature type="mutagenesis site" description="Constitutively inactive (GDP-bound) mutant. Increased lipid droplets accumulation." evidence="7">
    <original>G</original>
    <variation>N</variation>
    <location>
        <position position="28"/>
    </location>
</feature>
<feature type="mutagenesis site" description="Constitutively active (GTP-bound) mutant. Decreased lipid droplets accumulation." evidence="7">
    <original>Q</original>
    <variation>L</variation>
    <location>
        <position position="73"/>
    </location>
</feature>
<feature type="mutagenesis site" description="Abolishes interaction with RNF7 and CUL5." evidence="6 8">
    <original>LPLP</original>
    <variation>AAAA</variation>
    <location>
        <begin position="212"/>
        <end position="215"/>
    </location>
</feature>
<feature type="mutagenesis site" description="Abolishes interaction with RNF7." evidence="6">
    <original>HL</original>
    <variation>AA</variation>
    <location>
        <begin position="221"/>
        <end position="222"/>
    </location>
</feature>
<feature type="sequence conflict" description="In Ref. 5; AAH28696." evidence="10" ref="5">
    <original>K</original>
    <variation>R</variation>
    <location>
        <position position="64"/>
    </location>
</feature>
<comment type="function">
    <text evidence="6 7 8">RAB40C small GTPase acts as substrate-recognition component of the ECS(RAB40C) E3 ubiquitin ligase complex which mediates the ubiquitination and subsequent proteasomal degradation of target proteins (PubMed:15601820, PubMed:35512830). The Rab40 subfamily belongs to the Rab family that are key regulators of intracellular membrane trafficking, from the formation of transport vesicles to their fusion with membranes. Rabs cycle between an inactive GDP-bound form and an active GTP-bound form that is able to recruit to membranes different sets of downstream effectors directly responsible for vesicle formation, movement, tethering and fusion (PubMed:29156729). As part of the ECS(RAB40C) complex, mediates ANKRD28 ubiquitination and degradation, thereby inhibiting protein phosphatase 6 (PP6) complex activity and focal adhesion assembly during cell migration (PubMed:35512830). Also negatively regulate lipid droplets accumulation in a GTP-dependent manner (PubMed:29156729).</text>
</comment>
<comment type="catalytic activity">
    <reaction evidence="7">
        <text>GTP + H2O = GDP + phosphate + H(+)</text>
        <dbReference type="Rhea" id="RHEA:19669"/>
        <dbReference type="ChEBI" id="CHEBI:15377"/>
        <dbReference type="ChEBI" id="CHEBI:15378"/>
        <dbReference type="ChEBI" id="CHEBI:37565"/>
        <dbReference type="ChEBI" id="CHEBI:43474"/>
        <dbReference type="ChEBI" id="CHEBI:58189"/>
        <dbReference type="EC" id="3.6.5.2"/>
    </reaction>
    <physiologicalReaction direction="left-to-right" evidence="11">
        <dbReference type="Rhea" id="RHEA:19670"/>
    </physiologicalReaction>
</comment>
<comment type="cofactor">
    <cofactor evidence="1">
        <name>Mg(2+)</name>
        <dbReference type="ChEBI" id="CHEBI:18420"/>
    </cofactor>
</comment>
<comment type="activity regulation">
    <text evidence="7 10">Regulated by guanine nucleotide exchange factors (GEFs) which promote the exchange of bound GDP for free GTP (Probable). Regulated by GTPase activating proteins (GAPs) including DAB2IP, which increase the GTP hydrolysis activity (PubMed:29156729). Inhibited by GDP dissociation inhibitors (GDIs) (Probable).</text>
</comment>
<comment type="pathway">
    <text>Protein modification; protein ubiquitination.</text>
</comment>
<comment type="subunit">
    <text evidence="6 7 8">Component of the cullin-5-RING E3 ubiquitin-protein ligase complex (ECS(RAB40C) complex) composed of CUL5, Elongin BC (ELOB and ELOC), RNF7/RBX2 and RAB40C (PubMed:15601820, PubMed:35512830). Interacts with protein phosphatase 6 (PP6) complex components ANKRD28, ANKRD52, PPP6C, PP6R1 and PP6R2; the interaction leads to ANKRD28 ubiquitination and decreased PP6 activity (PubMed:35512830). Interacts with DAB2IP; DAB2IP acts as a GAP for RAB40C (PubMed:29156729).</text>
</comment>
<comment type="subcellular location">
    <subcellularLocation>
        <location evidence="10">Cell membrane</location>
        <topology evidence="10">Lipid-anchor</topology>
        <orientation evidence="10">Cytoplasmic side</orientation>
    </subcellularLocation>
    <subcellularLocation>
        <location evidence="8">Cytoplasm</location>
        <location evidence="8">Cytosol</location>
    </subcellularLocation>
    <subcellularLocation>
        <location evidence="8">Golgi apparatus membrane</location>
    </subcellularLocation>
    <text evidence="8">Mostly localized in the cytosol and also with actin ruffles.</text>
</comment>
<comment type="alternative products">
    <event type="alternative splicing"/>
    <isoform>
        <id>Q96S21-1</id>
        <name>1</name>
        <sequence type="displayed"/>
    </isoform>
    <isoform>
        <id>Q96S21-2</id>
        <name>2</name>
        <sequence type="described" ref="VSP_055835"/>
    </isoform>
</comment>
<comment type="domain">
    <text evidence="6 8">The SOCS box contains two defined motifs including the BC box that recruits and binds Elongin BC complex, and the Cul box which interacts with the Cullin family of proteins to form a ECS (Elongin-Cullin-SOCS-box protein) E3 ubiquitin ligase complex.</text>
</comment>
<comment type="domain">
    <text evidence="1">Switch I, switch II and the interswitch regions are characteristic of Rab GTPases and mediate the interactions with Rab downstream effectors. The switch regions undergo conformational changes upon nucleotide binding which drive interaction with specific sets of effector proteins, with most effectors only binding to GTP-bound Rab.</text>
</comment>
<comment type="similarity">
    <text evidence="10">Belongs to the small GTPase superfamily. Rab family.</text>
</comment>
<gene>
    <name evidence="12" type="primary">RAB40C</name>
    <name type="synonym">RARL</name>
    <name type="synonym">RASL8C</name>
</gene>
<reference key="1">
    <citation type="submission" date="2004-11" db="EMBL/GenBank/DDBJ databases">
        <title>Sequencing of E. coli expression clones for human proteins.</title>
        <authorList>
            <person name="Sievert V."/>
            <person name="Buessow K."/>
        </authorList>
    </citation>
    <scope>NUCLEOTIDE SEQUENCE [MRNA] (ISOFORM 2)</scope>
    <source>
        <tissue>Brain</tissue>
    </source>
</reference>
<reference key="2">
    <citation type="journal article" date="2001" name="Hum. Mol. Genet.">
        <title>Sequence, structure and pathology of the fully annotated terminal 2 Mb of the short arm of human chromosome 16.</title>
        <authorList>
            <person name="Daniels R.J."/>
            <person name="Peden J.F."/>
            <person name="Lloyd C."/>
            <person name="Horsley S.W."/>
            <person name="Clark K."/>
            <person name="Tufarelli C."/>
            <person name="Kearney L."/>
            <person name="Buckle V.J."/>
            <person name="Doggett N.A."/>
            <person name="Flint J."/>
            <person name="Higgs D.R."/>
        </authorList>
    </citation>
    <scope>NUCLEOTIDE SEQUENCE [LARGE SCALE GENOMIC DNA]</scope>
</reference>
<reference key="3">
    <citation type="journal article" date="2004" name="Nature">
        <title>The sequence and analysis of duplication-rich human chromosome 16.</title>
        <authorList>
            <person name="Martin J."/>
            <person name="Han C."/>
            <person name="Gordon L.A."/>
            <person name="Terry A."/>
            <person name="Prabhakar S."/>
            <person name="She X."/>
            <person name="Xie G."/>
            <person name="Hellsten U."/>
            <person name="Chan Y.M."/>
            <person name="Altherr M."/>
            <person name="Couronne O."/>
            <person name="Aerts A."/>
            <person name="Bajorek E."/>
            <person name="Black S."/>
            <person name="Blumer H."/>
            <person name="Branscomb E."/>
            <person name="Brown N.C."/>
            <person name="Bruno W.J."/>
            <person name="Buckingham J.M."/>
            <person name="Callen D.F."/>
            <person name="Campbell C.S."/>
            <person name="Campbell M.L."/>
            <person name="Campbell E.W."/>
            <person name="Caoile C."/>
            <person name="Challacombe J.F."/>
            <person name="Chasteen L.A."/>
            <person name="Chertkov O."/>
            <person name="Chi H.C."/>
            <person name="Christensen M."/>
            <person name="Clark L.M."/>
            <person name="Cohn J.D."/>
            <person name="Denys M."/>
            <person name="Detter J.C."/>
            <person name="Dickson M."/>
            <person name="Dimitrijevic-Bussod M."/>
            <person name="Escobar J."/>
            <person name="Fawcett J.J."/>
            <person name="Flowers D."/>
            <person name="Fotopulos D."/>
            <person name="Glavina T."/>
            <person name="Gomez M."/>
            <person name="Gonzales E."/>
            <person name="Goodstein D."/>
            <person name="Goodwin L.A."/>
            <person name="Grady D.L."/>
            <person name="Grigoriev I."/>
            <person name="Groza M."/>
            <person name="Hammon N."/>
            <person name="Hawkins T."/>
            <person name="Haydu L."/>
            <person name="Hildebrand C.E."/>
            <person name="Huang W."/>
            <person name="Israni S."/>
            <person name="Jett J."/>
            <person name="Jewett P.B."/>
            <person name="Kadner K."/>
            <person name="Kimball H."/>
            <person name="Kobayashi A."/>
            <person name="Krawczyk M.-C."/>
            <person name="Leyba T."/>
            <person name="Longmire J.L."/>
            <person name="Lopez F."/>
            <person name="Lou Y."/>
            <person name="Lowry S."/>
            <person name="Ludeman T."/>
            <person name="Manohar C.F."/>
            <person name="Mark G.A."/>
            <person name="McMurray K.L."/>
            <person name="Meincke L.J."/>
            <person name="Morgan J."/>
            <person name="Moyzis R.K."/>
            <person name="Mundt M.O."/>
            <person name="Munk A.C."/>
            <person name="Nandkeshwar R.D."/>
            <person name="Pitluck S."/>
            <person name="Pollard M."/>
            <person name="Predki P."/>
            <person name="Parson-Quintana B."/>
            <person name="Ramirez L."/>
            <person name="Rash S."/>
            <person name="Retterer J."/>
            <person name="Ricke D.O."/>
            <person name="Robinson D.L."/>
            <person name="Rodriguez A."/>
            <person name="Salamov A."/>
            <person name="Saunders E.H."/>
            <person name="Scott D."/>
            <person name="Shough T."/>
            <person name="Stallings R.L."/>
            <person name="Stalvey M."/>
            <person name="Sutherland R.D."/>
            <person name="Tapia R."/>
            <person name="Tesmer J.G."/>
            <person name="Thayer N."/>
            <person name="Thompson L.S."/>
            <person name="Tice H."/>
            <person name="Torney D.C."/>
            <person name="Tran-Gyamfi M."/>
            <person name="Tsai M."/>
            <person name="Ulanovsky L.E."/>
            <person name="Ustaszewska A."/>
            <person name="Vo N."/>
            <person name="White P.S."/>
            <person name="Williams A.L."/>
            <person name="Wills P.L."/>
            <person name="Wu J.-R."/>
            <person name="Wu K."/>
            <person name="Yang J."/>
            <person name="DeJong P."/>
            <person name="Bruce D."/>
            <person name="Doggett N.A."/>
            <person name="Deaven L."/>
            <person name="Schmutz J."/>
            <person name="Grimwood J."/>
            <person name="Richardson P."/>
            <person name="Rokhsar D.S."/>
            <person name="Eichler E.E."/>
            <person name="Gilna P."/>
            <person name="Lucas S.M."/>
            <person name="Myers R.M."/>
            <person name="Rubin E.M."/>
            <person name="Pennacchio L.A."/>
        </authorList>
    </citation>
    <scope>NUCLEOTIDE SEQUENCE [LARGE SCALE GENOMIC DNA]</scope>
</reference>
<reference key="4">
    <citation type="submission" date="2005-09" db="EMBL/GenBank/DDBJ databases">
        <authorList>
            <person name="Mural R.J."/>
            <person name="Istrail S."/>
            <person name="Sutton G.G."/>
            <person name="Florea L."/>
            <person name="Halpern A.L."/>
            <person name="Mobarry C.M."/>
            <person name="Lippert R."/>
            <person name="Walenz B."/>
            <person name="Shatkay H."/>
            <person name="Dew I."/>
            <person name="Miller J.R."/>
            <person name="Flanigan M.J."/>
            <person name="Edwards N.J."/>
            <person name="Bolanos R."/>
            <person name="Fasulo D."/>
            <person name="Halldorsson B.V."/>
            <person name="Hannenhalli S."/>
            <person name="Turner R."/>
            <person name="Yooseph S."/>
            <person name="Lu F."/>
            <person name="Nusskern D.R."/>
            <person name="Shue B.C."/>
            <person name="Zheng X.H."/>
            <person name="Zhong F."/>
            <person name="Delcher A.L."/>
            <person name="Huson D.H."/>
            <person name="Kravitz S.A."/>
            <person name="Mouchard L."/>
            <person name="Reinert K."/>
            <person name="Remington K.A."/>
            <person name="Clark A.G."/>
            <person name="Waterman M.S."/>
            <person name="Eichler E.E."/>
            <person name="Adams M.D."/>
            <person name="Hunkapiller M.W."/>
            <person name="Myers E.W."/>
            <person name="Venter J.C."/>
        </authorList>
    </citation>
    <scope>NUCLEOTIDE SEQUENCE [LARGE SCALE GENOMIC DNA]</scope>
</reference>
<reference key="5">
    <citation type="journal article" date="2004" name="Genome Res.">
        <title>The status, quality, and expansion of the NIH full-length cDNA project: the Mammalian Gene Collection (MGC).</title>
        <authorList>
            <consortium name="The MGC Project Team"/>
        </authorList>
    </citation>
    <scope>NUCLEOTIDE SEQUENCE [LARGE SCALE MRNA] (ISOFORM 1)</scope>
    <source>
        <tissue>Testis</tissue>
    </source>
</reference>
<reference key="6">
    <citation type="journal article" date="2004" name="Genes Dev.">
        <title>VHL-box and SOCS-box domains determine binding specificity for Cul2-Rbx1 and Cul5-Rbx2 modules of ubiquitin ligases.</title>
        <authorList>
            <person name="Kamura T."/>
            <person name="Maenaka K."/>
            <person name="Kotoshiba S."/>
            <person name="Matsumoto M."/>
            <person name="Kohda D."/>
            <person name="Conaway R.C."/>
            <person name="Conaway J.W."/>
            <person name="Nakayama K.I."/>
        </authorList>
    </citation>
    <scope>FUNCTION IN AN E3 UBIQUITIN-PROTEIN LIGASE COMPLEX</scope>
    <scope>IDENTIFICATION BY MASS SPECTROMETRY</scope>
    <scope>INTERACTION WITH CUL5; RNF7; ELOB AND ELOC</scope>
    <scope>MUTAGENESIS OF 212-LEU--PRO-215 AND 221-HIS-LEU-222</scope>
    <scope>DOMAIN</scope>
</reference>
<reference key="7">
    <citation type="journal article" date="2017" name="Oncotarget">
        <title>A RasGAP, DAB2IP, regulates lipid droplet homeostasis by serving as GAP toward RAB40C.</title>
        <authorList>
            <person name="Luo X."/>
            <person name="Li C."/>
            <person name="Tan R."/>
            <person name="Xu X."/>
            <person name="Wu W.K.K."/>
            <person name="Satoh A."/>
            <person name="Wang T."/>
            <person name="Yu S."/>
        </authorList>
    </citation>
    <scope>FUNCTION</scope>
    <scope>INTERACTION WITH DAB2IP</scope>
    <scope>ACTIVITY REGULATION</scope>
    <scope>CATALYTIC ACTIVITY</scope>
    <scope>MUTAGENESIS OF GLY-28 AND GLN-73</scope>
</reference>
<reference key="8">
    <citation type="journal article" date="2022" name="Life. Sci Alliance">
        <title>Rab40c regulates focal adhesions and PP6 activity by controlling ANKRD28 ubiquitylation.</title>
        <authorList>
            <person name="Han K.J."/>
            <person name="Mikalayeva V."/>
            <person name="Gerber S.A."/>
            <person name="Kettenbach A.N."/>
            <person name="Skeberdis V.A."/>
            <person name="Prekeris R."/>
        </authorList>
    </citation>
    <scope>FUNCTION</scope>
    <scope>SUBCELLULAR LOCATION</scope>
    <scope>MUTAGENESIS OF 212-LEU--PRO-215</scope>
    <scope>INTERACTION WITH CUL5; RNF7; ELOB; ELOC AND ANKRD28</scope>
    <scope>DOMAIN</scope>
</reference>
<accession>Q96S21</accession>
<accession>A2IDE2</accession>
<accession>D3DU54</accession>
<accession>O60795</accession>
<accession>Q4TT41</accession>
<accession>Q5PXE8</accession>
<accession>Q6PIU5</accession>
<protein>
    <recommendedName>
        <fullName>Ras-related protein Rab-40C</fullName>
        <ecNumber evidence="7">3.6.5.2</ecNumber>
    </recommendedName>
    <alternativeName>
        <fullName>Rar-like protein</fullName>
    </alternativeName>
    <alternativeName>
        <fullName>Ras-like protein family member 8C</fullName>
    </alternativeName>
    <alternativeName>
        <fullName>SOCS box-containing protein RAR3</fullName>
    </alternativeName>
</protein>
<name>RB40C_HUMAN</name>
<sequence length="281" mass="31304">MGSQGSPVKSYDYLLKFLLVGDSDVGKGEILESLQDGAAESPYAYSNGIDYKTTTILLDGRRVKLELWDTSGQGRFCTIFRSYSRGAQGILLVYDITNRWSFDGIDRWIKEIDEHAPGVPRILVGNRLHLAFKRQVPTEQARAYAEKNCMTFFEVSPLCNFNVIESFTELSRIVLMRHGMEKIWRPNRVFSLQDLCCRAIVSCTPVHLIDKLPLPVTIKSHLKSFSMANGMNAVMMHGRSYSLASGAGGGGSKGNSLKRSKSIRPPQSPPQNCSRSNCKIS</sequence>